<evidence type="ECO:0000250" key="1"/>
<evidence type="ECO:0000250" key="2">
    <source>
        <dbReference type="UniProtKB" id="P05026"/>
    </source>
</evidence>
<evidence type="ECO:0000250" key="3">
    <source>
        <dbReference type="UniProtKB" id="P07340"/>
    </source>
</evidence>
<evidence type="ECO:0000250" key="4">
    <source>
        <dbReference type="UniProtKB" id="P14094"/>
    </source>
</evidence>
<evidence type="ECO:0000255" key="5"/>
<evidence type="ECO:0000305" key="6"/>
<organism>
    <name type="scientific">Macaca fascicularis</name>
    <name type="common">Crab-eating macaque</name>
    <name type="synonym">Cynomolgus monkey</name>
    <dbReference type="NCBI Taxonomy" id="9541"/>
    <lineage>
        <taxon>Eukaryota</taxon>
        <taxon>Metazoa</taxon>
        <taxon>Chordata</taxon>
        <taxon>Craniata</taxon>
        <taxon>Vertebrata</taxon>
        <taxon>Euteleostomi</taxon>
        <taxon>Mammalia</taxon>
        <taxon>Eutheria</taxon>
        <taxon>Euarchontoglires</taxon>
        <taxon>Primates</taxon>
        <taxon>Haplorrhini</taxon>
        <taxon>Catarrhini</taxon>
        <taxon>Cercopithecidae</taxon>
        <taxon>Cercopithecinae</taxon>
        <taxon>Macaca</taxon>
    </lineage>
</organism>
<accession>Q4R4V5</accession>
<reference key="1">
    <citation type="submission" date="2005-06" db="EMBL/GenBank/DDBJ databases">
        <title>DNA sequences of macaque genes expressed in brain or testis and its evolutionary implications.</title>
        <authorList>
            <consortium name="International consortium for macaque cDNA sequencing and analysis"/>
        </authorList>
    </citation>
    <scope>NUCLEOTIDE SEQUENCE [LARGE SCALE MRNA]</scope>
    <source>
        <tissue>Temporal cortex</tissue>
    </source>
</reference>
<name>AT1B1_MACFA</name>
<sequence>MARGKAKEEGSWKKFIWNSEKKEFLGRTGGSWFKILLFYVIFYGCLAGIFIGTIQVMLLTISELKPTYQDRVAPPGLTQIPQIQKTEISFRPNDPKSYEAYVLNIVRFLEKYKDSAQRDDMIFEDCGDVPSEPKERGEFNHERGERKVCRFKLEWLGNCSGLNDETYGYKEGKPCIIIKLNRVLGFKPKPPKNESLETYPGMKYNANVLPVQCTGKRDEDKEKIGNVEYFGLGNSPGFPLQYYPYYGKLLQPKYLQPLLAVQFTNLTMDTEIRIECKAYGENIGYSEKDRFQGRFDVKIEVKS</sequence>
<dbReference type="EMBL" id="AB169789">
    <property type="protein sequence ID" value="BAE01870.1"/>
    <property type="molecule type" value="mRNA"/>
</dbReference>
<dbReference type="RefSeq" id="NP_001272243.1">
    <property type="nucleotide sequence ID" value="NM_001285314.1"/>
</dbReference>
<dbReference type="RefSeq" id="XP_045248348.1">
    <property type="nucleotide sequence ID" value="XM_045392413.2"/>
</dbReference>
<dbReference type="SMR" id="Q4R4V5"/>
<dbReference type="STRING" id="9541.ENSMFAP00000044668"/>
<dbReference type="GlyCosmos" id="Q4R4V5">
    <property type="glycosylation" value="3 sites, No reported glycans"/>
</dbReference>
<dbReference type="GeneID" id="101866484"/>
<dbReference type="VEuPathDB" id="HostDB:ENSMFAG00000039661"/>
<dbReference type="eggNOG" id="KOG3927">
    <property type="taxonomic scope" value="Eukaryota"/>
</dbReference>
<dbReference type="OMA" id="WEGFRVF"/>
<dbReference type="Proteomes" id="UP000233100">
    <property type="component" value="Chromosome 1"/>
</dbReference>
<dbReference type="GO" id="GO:0016324">
    <property type="term" value="C:apical plasma membrane"/>
    <property type="evidence" value="ECO:0000250"/>
    <property type="project" value="UniProtKB"/>
</dbReference>
<dbReference type="GO" id="GO:0042383">
    <property type="term" value="C:sarcolemma"/>
    <property type="evidence" value="ECO:0007669"/>
    <property type="project" value="UniProtKB-SubCell"/>
</dbReference>
<dbReference type="GO" id="GO:0005890">
    <property type="term" value="C:sodium:potassium-exchanging ATPase complex"/>
    <property type="evidence" value="ECO:0007669"/>
    <property type="project" value="InterPro"/>
</dbReference>
<dbReference type="GO" id="GO:0001671">
    <property type="term" value="F:ATPase activator activity"/>
    <property type="evidence" value="ECO:0007669"/>
    <property type="project" value="TreeGrafter"/>
</dbReference>
<dbReference type="GO" id="GO:0007155">
    <property type="term" value="P:cell adhesion"/>
    <property type="evidence" value="ECO:0007669"/>
    <property type="project" value="UniProtKB-KW"/>
</dbReference>
<dbReference type="GO" id="GO:0045087">
    <property type="term" value="P:innate immune response"/>
    <property type="evidence" value="ECO:0007669"/>
    <property type="project" value="UniProtKB-KW"/>
</dbReference>
<dbReference type="GO" id="GO:0030007">
    <property type="term" value="P:intracellular potassium ion homeostasis"/>
    <property type="evidence" value="ECO:0007669"/>
    <property type="project" value="TreeGrafter"/>
</dbReference>
<dbReference type="GO" id="GO:0006883">
    <property type="term" value="P:intracellular sodium ion homeostasis"/>
    <property type="evidence" value="ECO:0007669"/>
    <property type="project" value="TreeGrafter"/>
</dbReference>
<dbReference type="GO" id="GO:1990573">
    <property type="term" value="P:potassium ion import across plasma membrane"/>
    <property type="evidence" value="ECO:0007669"/>
    <property type="project" value="TreeGrafter"/>
</dbReference>
<dbReference type="GO" id="GO:0036376">
    <property type="term" value="P:sodium ion export across plasma membrane"/>
    <property type="evidence" value="ECO:0007669"/>
    <property type="project" value="TreeGrafter"/>
</dbReference>
<dbReference type="FunFam" id="1.20.5.170:FF:000062">
    <property type="entry name" value="Sodium/potassium-transporting ATPase subunit beta"/>
    <property type="match status" value="1"/>
</dbReference>
<dbReference type="FunFam" id="2.60.40.1660:FF:000002">
    <property type="entry name" value="Sodium/potassium-transporting ATPase subunit beta"/>
    <property type="match status" value="1"/>
</dbReference>
<dbReference type="Gene3D" id="1.20.5.170">
    <property type="match status" value="1"/>
</dbReference>
<dbReference type="Gene3D" id="2.60.40.1660">
    <property type="entry name" value="Na, k-atpase alpha subunit"/>
    <property type="match status" value="1"/>
</dbReference>
<dbReference type="InterPro" id="IPR000402">
    <property type="entry name" value="Na/K_ATPase_sub_beta"/>
</dbReference>
<dbReference type="InterPro" id="IPR038702">
    <property type="entry name" value="Na/K_ATPase_sub_beta_sf"/>
</dbReference>
<dbReference type="NCBIfam" id="TIGR01107">
    <property type="entry name" value="Na_K_ATPase_bet"/>
    <property type="match status" value="1"/>
</dbReference>
<dbReference type="PANTHER" id="PTHR11523">
    <property type="entry name" value="SODIUM/POTASSIUM-DEPENDENT ATPASE BETA SUBUNIT"/>
    <property type="match status" value="1"/>
</dbReference>
<dbReference type="PANTHER" id="PTHR11523:SF10">
    <property type="entry name" value="SODIUM_POTASSIUM-TRANSPORTING ATPASE SUBUNIT BETA-1"/>
    <property type="match status" value="1"/>
</dbReference>
<dbReference type="Pfam" id="PF00287">
    <property type="entry name" value="Na_K-ATPase"/>
    <property type="match status" value="1"/>
</dbReference>
<dbReference type="PROSITE" id="PS00390">
    <property type="entry name" value="ATPASE_NA_K_BETA_1"/>
    <property type="match status" value="1"/>
</dbReference>
<dbReference type="PROSITE" id="PS00391">
    <property type="entry name" value="ATPASE_NA_K_BETA_2"/>
    <property type="match status" value="1"/>
</dbReference>
<keyword id="KW-0130">Cell adhesion</keyword>
<keyword id="KW-1003">Cell membrane</keyword>
<keyword id="KW-1015">Disulfide bond</keyword>
<keyword id="KW-0318">Glutathionylation</keyword>
<keyword id="KW-0325">Glycoprotein</keyword>
<keyword id="KW-0391">Immunity</keyword>
<keyword id="KW-0399">Innate immunity</keyword>
<keyword id="KW-0406">Ion transport</keyword>
<keyword id="KW-0472">Membrane</keyword>
<keyword id="KW-0597">Phosphoprotein</keyword>
<keyword id="KW-0630">Potassium</keyword>
<keyword id="KW-0633">Potassium transport</keyword>
<keyword id="KW-1185">Reference proteome</keyword>
<keyword id="KW-0735">Signal-anchor</keyword>
<keyword id="KW-0915">Sodium</keyword>
<keyword id="KW-0739">Sodium transport</keyword>
<keyword id="KW-0740">Sodium/potassium transport</keyword>
<keyword id="KW-0812">Transmembrane</keyword>
<keyword id="KW-1133">Transmembrane helix</keyword>
<keyword id="KW-0813">Transport</keyword>
<gene>
    <name type="primary">ATP1B1</name>
    <name type="ORF">QtrA-13828</name>
</gene>
<feature type="chain" id="PRO_0000265956" description="Sodium/potassium-transporting ATPase subunit beta-1">
    <location>
        <begin position="1"/>
        <end position="303"/>
    </location>
</feature>
<feature type="topological domain" description="Cytoplasmic" evidence="5">
    <location>
        <begin position="1"/>
        <end position="34"/>
    </location>
</feature>
<feature type="transmembrane region" description="Helical; Signal-anchor for type II membrane protein" evidence="5">
    <location>
        <begin position="35"/>
        <end position="62"/>
    </location>
</feature>
<feature type="topological domain" description="Extracellular" evidence="5">
    <location>
        <begin position="63"/>
        <end position="303"/>
    </location>
</feature>
<feature type="region of interest" description="immunoglobulin-like" evidence="1">
    <location>
        <begin position="191"/>
        <end position="303"/>
    </location>
</feature>
<feature type="modified residue" description="Phosphoserine" evidence="3">
    <location>
        <position position="11"/>
    </location>
</feature>
<feature type="modified residue" description="Phosphotyrosine" evidence="4">
    <location>
        <position position="101"/>
    </location>
</feature>
<feature type="glycosylation site" description="N-linked (GlcNAc...) asparagine" evidence="5">
    <location>
        <position position="158"/>
    </location>
</feature>
<feature type="glycosylation site" description="N-linked (GlcNAc...) asparagine" evidence="5">
    <location>
        <position position="193"/>
    </location>
</feature>
<feature type="glycosylation site" description="N-linked (GlcNAc...) asparagine" evidence="5">
    <location>
        <position position="265"/>
    </location>
</feature>
<feature type="disulfide bond" evidence="1">
    <location>
        <begin position="126"/>
        <end position="149"/>
    </location>
</feature>
<feature type="disulfide bond" evidence="1">
    <location>
        <begin position="159"/>
        <end position="175"/>
    </location>
</feature>
<feature type="disulfide bond" evidence="1">
    <location>
        <begin position="213"/>
        <end position="276"/>
    </location>
</feature>
<proteinExistence type="evidence at transcript level"/>
<comment type="function">
    <text evidence="2">This is the non-catalytic component of the active enzyme, which catalyzes the hydrolysis of ATP coupled with the exchange of Na(+) and K(+) ions across the plasma membrane. The beta subunit regulates, through assembly of alpha/beta heterodimers, the number of sodium pumps transported to the plasma membrane. Plays a role in innate immunity by enhancing virus-triggered induction of interferons (IFNs) and interferon stimulated genes (ISGs). Mechanistically, enhances the ubiquitination of TRAF3 and TRAF6 as well as the phosphorylation of TAK1 and TBK1.</text>
</comment>
<comment type="function">
    <text evidence="2">Involved in cell adhesion and establishing epithelial cell polarity.</text>
</comment>
<comment type="subunit">
    <text evidence="2 3 4">The sodium/potassium-transporting ATPase is composed of a catalytic alpha subunit, an auxiliary non-catalytic beta subunit and an additional regulatory subunit. Interacts with catalytic subunit ATP12A (By similarity). Interacts with regulatory subunit FXYD1 (By similarity). Interacts with regulatory subunit FXYD3 (By similarity). Interacts with NKAIN1, NKAIN2 and NKAIN4 (By similarity). Interacts with MLC1. Part of a complex containing MLC1, TRPV4, AQP4 and HEPACAM. Interacts with KIRREL3 (By similarity). Interacts with OBSCN (via protein kinase domain 1) (By similarity). Interacts with TRAF3 and TRAF6 (By similarity).</text>
</comment>
<comment type="subcellular location">
    <subcellularLocation>
        <location evidence="5">Cell membrane</location>
        <topology evidence="5">Single-pass type II membrane protein</topology>
    </subcellularLocation>
    <subcellularLocation>
        <location evidence="3">Apical cell membrane</location>
        <topology evidence="5">Single-pass type II membrane protein</topology>
    </subcellularLocation>
    <subcellularLocation>
        <location evidence="4">Cell membrane</location>
        <location evidence="4">Sarcolemma</location>
    </subcellularLocation>
    <text evidence="4">Colocalizes with OBSCN at the intercalated disk and sarcolemma in cardiomyocytes. Localizes in long striations at the level of Z and M lines.</text>
</comment>
<comment type="domain">
    <text evidence="1">The C-terminal lobe folds into an immunoglobulin-like domain and mediates cell adhesion properties.</text>
</comment>
<comment type="PTM">
    <text evidence="3 4">Glutathionylated (By similarity). N-glycosylated (By similarity).</text>
</comment>
<comment type="similarity">
    <text evidence="6">Belongs to the X(+)/potassium ATPases subunit beta family.</text>
</comment>
<protein>
    <recommendedName>
        <fullName>Sodium/potassium-transporting ATPase subunit beta-1</fullName>
    </recommendedName>
    <alternativeName>
        <fullName>Sodium/potassium-dependent ATPase subunit beta-1</fullName>
    </alternativeName>
</protein>